<protein>
    <recommendedName>
        <fullName>Cytochrome P450 67</fullName>
        <ecNumber>1.14.-.-</ecNumber>
    </recommendedName>
    <alternativeName>
        <fullName>CYPLXVII</fullName>
    </alternativeName>
    <alternativeName>
        <fullName>Planta-induced rust protein 16</fullName>
    </alternativeName>
</protein>
<proteinExistence type="evidence at transcript level"/>
<feature type="chain" id="PRO_0000052055" description="Cytochrome P450 67">
    <location>
        <begin position="1" status="less than"/>
        <end position="541"/>
    </location>
</feature>
<feature type="binding site" description="axial binding residue" evidence="1">
    <location>
        <position position="479"/>
    </location>
    <ligand>
        <name>heme</name>
        <dbReference type="ChEBI" id="CHEBI:30413"/>
    </ligand>
    <ligandPart>
        <name>Fe</name>
        <dbReference type="ChEBI" id="CHEBI:18248"/>
    </ligandPart>
</feature>
<feature type="non-terminal residue">
    <location>
        <position position="1"/>
    </location>
</feature>
<reference key="1">
    <citation type="journal article" date="1997" name="Mol. Plant Microbe Interact.">
        <title>Characterization of in planta-induced rust genes isolated from a haustorium-specific cDNA library.</title>
        <authorList>
            <person name="Hahn M."/>
            <person name="Mendgen K."/>
        </authorList>
    </citation>
    <scope>NUCLEOTIDE SEQUENCE [MRNA]</scope>
    <source>
        <strain>I2</strain>
        <tissue>Haustorium</tissue>
    </source>
</reference>
<keyword id="KW-0349">Heme</keyword>
<keyword id="KW-0408">Iron</keyword>
<keyword id="KW-0479">Metal-binding</keyword>
<keyword id="KW-0503">Monooxygenase</keyword>
<keyword id="KW-0560">Oxidoreductase</keyword>
<name>CP67_UROFA</name>
<evidence type="ECO:0000250" key="1"/>
<evidence type="ECO:0000305" key="2"/>
<dbReference type="EC" id="1.14.-.-"/>
<dbReference type="EMBL" id="U81793">
    <property type="protein sequence ID" value="AAB39881.1"/>
    <property type="molecule type" value="mRNA"/>
</dbReference>
<dbReference type="SMR" id="O00061"/>
<dbReference type="GO" id="GO:0020037">
    <property type="term" value="F:heme binding"/>
    <property type="evidence" value="ECO:0007669"/>
    <property type="project" value="InterPro"/>
</dbReference>
<dbReference type="GO" id="GO:0005506">
    <property type="term" value="F:iron ion binding"/>
    <property type="evidence" value="ECO:0007669"/>
    <property type="project" value="InterPro"/>
</dbReference>
<dbReference type="GO" id="GO:0004497">
    <property type="term" value="F:monooxygenase activity"/>
    <property type="evidence" value="ECO:0007669"/>
    <property type="project" value="UniProtKB-KW"/>
</dbReference>
<dbReference type="GO" id="GO:0016705">
    <property type="term" value="F:oxidoreductase activity, acting on paired donors, with incorporation or reduction of molecular oxygen"/>
    <property type="evidence" value="ECO:0007669"/>
    <property type="project" value="InterPro"/>
</dbReference>
<dbReference type="CDD" id="cd11061">
    <property type="entry name" value="CYP67-like"/>
    <property type="match status" value="1"/>
</dbReference>
<dbReference type="Gene3D" id="1.10.630.10">
    <property type="entry name" value="Cytochrome P450"/>
    <property type="match status" value="1"/>
</dbReference>
<dbReference type="InterPro" id="IPR001128">
    <property type="entry name" value="Cyt_P450"/>
</dbReference>
<dbReference type="InterPro" id="IPR002401">
    <property type="entry name" value="Cyt_P450_E_grp-I"/>
</dbReference>
<dbReference type="InterPro" id="IPR036396">
    <property type="entry name" value="Cyt_P450_sf"/>
</dbReference>
<dbReference type="InterPro" id="IPR050121">
    <property type="entry name" value="Cytochrome_P450_monoxygenase"/>
</dbReference>
<dbReference type="PANTHER" id="PTHR24305">
    <property type="entry name" value="CYTOCHROME P450"/>
    <property type="match status" value="1"/>
</dbReference>
<dbReference type="PANTHER" id="PTHR24305:SF187">
    <property type="entry name" value="P450, PUTATIVE (EUROFUNG)-RELATED"/>
    <property type="match status" value="1"/>
</dbReference>
<dbReference type="Pfam" id="PF00067">
    <property type="entry name" value="p450"/>
    <property type="match status" value="1"/>
</dbReference>
<dbReference type="PRINTS" id="PR00463">
    <property type="entry name" value="EP450I"/>
</dbReference>
<dbReference type="SUPFAM" id="SSF48264">
    <property type="entry name" value="Cytochrome P450"/>
    <property type="match status" value="1"/>
</dbReference>
<sequence>FIVLISATAHFIFRRREPTAFQYACFQAGLALLLSVLLREPFGAVVLILLALNFLLGVQIALYRLFWHDLRVFPGPRLAAITQGWILREAYLGRSRFSMKEVGETYGDWVRIGPNELCTTSIEALSTIMGPKGWPKGPSYDSGITKGDSGGDSVLTIKNLPEHATRRRIWNKAFTPNAINGYLPSIEIRLEEMLSVIDTEIKKGESVDLCLQLGCFVYDTMCDMAFGALAGSAFSKTQEDKYRILTHMGRVVRQVGIVRNMPWLTPIVKAWPSSHRREQNEFKEFTKSMFLRRKNQGLGKQLDVFHYLLGEDTETGTRLTEAELAADSTLLVITGADTTRTVLLAFFLYLLKHPNYMEQLQAELLAAPDLSPPSLSRLEYLNACLQETMRLQPPSPANLQRICPPGGAVICGRQIPEGTKVRFSNYAIHRDERYFSRAEEFRPQRWLQKAKDDLGNQGEEKERLDQRAFFGFLIGPGACVAKNLAWMEMRLVVATILTNFDLSFAPGFDPVAFESSWTDAYLLLIEEPFEVMFTPKSQRMR</sequence>
<accession>O00061</accession>
<gene>
    <name type="primary">CYP67</name>
    <name type="synonym">PIG16</name>
</gene>
<organism>
    <name type="scientific">Uromyces fabae</name>
    <name type="common">Rust fungus</name>
    <dbReference type="NCBI Taxonomy" id="55588"/>
    <lineage>
        <taxon>Eukaryota</taxon>
        <taxon>Fungi</taxon>
        <taxon>Dikarya</taxon>
        <taxon>Basidiomycota</taxon>
        <taxon>Pucciniomycotina</taxon>
        <taxon>Pucciniomycetes</taxon>
        <taxon>Pucciniales</taxon>
        <taxon>Pucciniaceae</taxon>
        <taxon>Uromyces</taxon>
    </lineage>
</organism>
<comment type="cofactor">
    <cofactor evidence="1">
        <name>heme</name>
        <dbReference type="ChEBI" id="CHEBI:30413"/>
    </cofactor>
</comment>
<comment type="developmental stage">
    <text>Haustoria and rust-infected leaves. Also observed in non-germinated spores. After germination, expression stopped.</text>
</comment>
<comment type="similarity">
    <text evidence="2">Belongs to the cytochrome P450 family.</text>
</comment>